<reference key="1">
    <citation type="submission" date="2005-08" db="EMBL/GenBank/DDBJ databases">
        <authorList>
            <consortium name="NIH - Mammalian Gene Collection (MGC) project"/>
        </authorList>
    </citation>
    <scope>NUCLEOTIDE SEQUENCE [LARGE SCALE MRNA]</scope>
    <source>
        <strain>Crossbred X Angus</strain>
        <tissue>Ileum</tissue>
    </source>
</reference>
<protein>
    <recommendedName>
        <fullName>Sterol-4-alpha-carboxylate 3-dehydrogenase, decarboxylating</fullName>
        <ecNumber evidence="3">1.1.1.170</ecNumber>
    </recommendedName>
</protein>
<accession>Q3ZBE9</accession>
<comment type="function">
    <text evidence="2">Catalyzes the NAD(P)(+)-dependent oxidative decarboxylation of the C4 methyl groups of 4-alpha-carboxysterols in post-squalene cholesterol biosynthesis. Also plays a role in the regulation of the endocytic trafficking of EGFR.</text>
</comment>
<comment type="catalytic activity">
    <reaction evidence="3">
        <text>a 3beta-hydroxysteroid-4alpha-carboxylate + NADP(+) = a 3-oxosteroid + CO2 + NADPH</text>
        <dbReference type="Rhea" id="RHEA:34771"/>
        <dbReference type="ChEBI" id="CHEBI:16526"/>
        <dbReference type="ChEBI" id="CHEBI:47788"/>
        <dbReference type="ChEBI" id="CHEBI:57783"/>
        <dbReference type="ChEBI" id="CHEBI:58349"/>
        <dbReference type="ChEBI" id="CHEBI:136966"/>
        <dbReference type="EC" id="1.1.1.170"/>
    </reaction>
</comment>
<comment type="catalytic activity">
    <reaction evidence="3">
        <text>a 3beta-hydroxysteroid-4alpha-carboxylate + NAD(+) = a 3-oxosteroid + CO2 + NADH</text>
        <dbReference type="Rhea" id="RHEA:34775"/>
        <dbReference type="ChEBI" id="CHEBI:16526"/>
        <dbReference type="ChEBI" id="CHEBI:47788"/>
        <dbReference type="ChEBI" id="CHEBI:57540"/>
        <dbReference type="ChEBI" id="CHEBI:57945"/>
        <dbReference type="ChEBI" id="CHEBI:136966"/>
        <dbReference type="EC" id="1.1.1.170"/>
    </reaction>
</comment>
<comment type="catalytic activity">
    <reaction evidence="3">
        <text>4alpha-carboxyzymosterol + NADP(+) = zymosterone + CO2 + NADPH</text>
        <dbReference type="Rhea" id="RHEA:33455"/>
        <dbReference type="ChEBI" id="CHEBI:16526"/>
        <dbReference type="ChEBI" id="CHEBI:52386"/>
        <dbReference type="ChEBI" id="CHEBI:57783"/>
        <dbReference type="ChEBI" id="CHEBI:58349"/>
        <dbReference type="ChEBI" id="CHEBI:143575"/>
    </reaction>
    <physiologicalReaction direction="left-to-right" evidence="3">
        <dbReference type="Rhea" id="RHEA:33456"/>
    </physiologicalReaction>
</comment>
<comment type="catalytic activity">
    <reaction evidence="3">
        <text>4alpha-carboxy-4beta-methyl-5alpha-cholest-8-en-3beta-ol + NADP(+) = 4alpha-methyl-5alpha-cholest-8-en-3-one + CO2 + NADPH</text>
        <dbReference type="Rhea" id="RHEA:46828"/>
        <dbReference type="ChEBI" id="CHEBI:16526"/>
        <dbReference type="ChEBI" id="CHEBI:57783"/>
        <dbReference type="ChEBI" id="CHEBI:58349"/>
        <dbReference type="ChEBI" id="CHEBI:87047"/>
        <dbReference type="ChEBI" id="CHEBI:87050"/>
    </reaction>
    <physiologicalReaction direction="left-to-right" evidence="3">
        <dbReference type="Rhea" id="RHEA:46829"/>
    </physiologicalReaction>
</comment>
<comment type="catalytic activity">
    <reaction evidence="3">
        <text>4alpha-carboxy-5alpha-cholest-8-ene-3beta-ol + NADP(+) = 5alpha-cholest-8-en-3-one + CO2 + NADPH</text>
        <dbReference type="Rhea" id="RHEA:46848"/>
        <dbReference type="ChEBI" id="CHEBI:16526"/>
        <dbReference type="ChEBI" id="CHEBI:57783"/>
        <dbReference type="ChEBI" id="CHEBI:58349"/>
        <dbReference type="ChEBI" id="CHEBI:87055"/>
        <dbReference type="ChEBI" id="CHEBI:87056"/>
    </reaction>
    <physiologicalReaction direction="left-to-right" evidence="3">
        <dbReference type="Rhea" id="RHEA:46849"/>
    </physiologicalReaction>
</comment>
<comment type="catalytic activity">
    <reaction evidence="3">
        <text>4beta-methylzymosterol-4alpha-carboxylate + NADP(+) = 3-dehydro-4-methylzymosterol + CO2 + NADPH</text>
        <dbReference type="Rhea" id="RHEA:33447"/>
        <dbReference type="ChEBI" id="CHEBI:16526"/>
        <dbReference type="ChEBI" id="CHEBI:50593"/>
        <dbReference type="ChEBI" id="CHEBI:57783"/>
        <dbReference type="ChEBI" id="CHEBI:58349"/>
        <dbReference type="ChEBI" id="CHEBI:64925"/>
        <dbReference type="EC" id="1.1.1.170"/>
    </reaction>
    <physiologicalReaction direction="left-to-right" evidence="3">
        <dbReference type="Rhea" id="RHEA:33448"/>
    </physiologicalReaction>
</comment>
<comment type="catalytic activity">
    <reaction evidence="3">
        <text>4beta-methylzymosterol-4alpha-carboxylate + NAD(+) = 3-dehydro-4-methylzymosterol + CO2 + NADH</text>
        <dbReference type="Rhea" id="RHEA:47160"/>
        <dbReference type="ChEBI" id="CHEBI:16526"/>
        <dbReference type="ChEBI" id="CHEBI:50593"/>
        <dbReference type="ChEBI" id="CHEBI:57540"/>
        <dbReference type="ChEBI" id="CHEBI:57945"/>
        <dbReference type="ChEBI" id="CHEBI:64925"/>
    </reaction>
    <physiologicalReaction direction="left-to-right" evidence="3">
        <dbReference type="Rhea" id="RHEA:47161"/>
    </physiologicalReaction>
</comment>
<comment type="catalytic activity">
    <reaction evidence="3">
        <text>4alpha-carboxy-5alpha-cholest-8-ene-3beta-ol + NAD(+) = 5alpha-cholest-8-en-3-one + CO2 + NADH</text>
        <dbReference type="Rhea" id="RHEA:47172"/>
        <dbReference type="ChEBI" id="CHEBI:16526"/>
        <dbReference type="ChEBI" id="CHEBI:57540"/>
        <dbReference type="ChEBI" id="CHEBI:57945"/>
        <dbReference type="ChEBI" id="CHEBI:87055"/>
        <dbReference type="ChEBI" id="CHEBI:87056"/>
    </reaction>
    <physiologicalReaction direction="left-to-right" evidence="3">
        <dbReference type="Rhea" id="RHEA:47173"/>
    </physiologicalReaction>
</comment>
<comment type="catalytic activity">
    <reaction evidence="3">
        <text>4alpha-carboxy-4beta-methyl-5alpha-cholest-8-en-3beta-ol + NAD(+) = 4alpha-methyl-5alpha-cholest-8-en-3-one + CO2 + NADH</text>
        <dbReference type="Rhea" id="RHEA:47168"/>
        <dbReference type="ChEBI" id="CHEBI:16526"/>
        <dbReference type="ChEBI" id="CHEBI:57540"/>
        <dbReference type="ChEBI" id="CHEBI:57945"/>
        <dbReference type="ChEBI" id="CHEBI:87047"/>
        <dbReference type="ChEBI" id="CHEBI:87050"/>
    </reaction>
    <physiologicalReaction direction="left-to-right" evidence="3">
        <dbReference type="Rhea" id="RHEA:47169"/>
    </physiologicalReaction>
</comment>
<comment type="catalytic activity">
    <reaction evidence="3">
        <text>4alpha-carboxyzymosterol + NAD(+) = zymosterone + CO2 + NADH</text>
        <dbReference type="Rhea" id="RHEA:47164"/>
        <dbReference type="ChEBI" id="CHEBI:16526"/>
        <dbReference type="ChEBI" id="CHEBI:52386"/>
        <dbReference type="ChEBI" id="CHEBI:57540"/>
        <dbReference type="ChEBI" id="CHEBI:57945"/>
        <dbReference type="ChEBI" id="CHEBI:143575"/>
    </reaction>
    <physiologicalReaction direction="left-to-right" evidence="3">
        <dbReference type="Rhea" id="RHEA:47165"/>
    </physiologicalReaction>
</comment>
<comment type="pathway">
    <text>Steroid biosynthesis; zymosterol biosynthesis; zymosterol from lanosterol: step 4/6.</text>
</comment>
<comment type="subunit">
    <text evidence="2">Homodimer.</text>
</comment>
<comment type="subcellular location">
    <subcellularLocation>
        <location evidence="3">Endoplasmic reticulum membrane</location>
        <topology evidence="4">Single-pass membrane protein</topology>
    </subcellularLocation>
    <subcellularLocation>
        <location evidence="3">Lipid droplet</location>
    </subcellularLocation>
    <text evidence="3">Trafficking through the Golgi is necessary for ER membrane localization.</text>
</comment>
<comment type="similarity">
    <text evidence="5">Belongs to the 3-beta-HSD family.</text>
</comment>
<dbReference type="EC" id="1.1.1.170" evidence="3"/>
<dbReference type="EMBL" id="BC103389">
    <property type="protein sequence ID" value="AAI03390.1"/>
    <property type="molecule type" value="mRNA"/>
</dbReference>
<dbReference type="RefSeq" id="NP_001030559.1">
    <property type="nucleotide sequence ID" value="NM_001035482.2"/>
</dbReference>
<dbReference type="RefSeq" id="XP_015316952.1">
    <property type="nucleotide sequence ID" value="XM_015461466.3"/>
</dbReference>
<dbReference type="SMR" id="Q3ZBE9"/>
<dbReference type="FunCoup" id="Q3ZBE9">
    <property type="interactions" value="1772"/>
</dbReference>
<dbReference type="STRING" id="9913.ENSBTAP00000012167"/>
<dbReference type="PaxDb" id="9913-ENSBTAP00000012167"/>
<dbReference type="PeptideAtlas" id="Q3ZBE9"/>
<dbReference type="GeneID" id="616694"/>
<dbReference type="KEGG" id="bta:616694"/>
<dbReference type="CTD" id="50814"/>
<dbReference type="VEuPathDB" id="HostDB:ENSBTAG00000009231"/>
<dbReference type="eggNOG" id="KOG1430">
    <property type="taxonomic scope" value="Eukaryota"/>
</dbReference>
<dbReference type="HOGENOM" id="CLU_007383_6_8_1"/>
<dbReference type="InParanoid" id="Q3ZBE9"/>
<dbReference type="OMA" id="STAHWFD"/>
<dbReference type="OrthoDB" id="10262413at2759"/>
<dbReference type="TreeFam" id="TF354279"/>
<dbReference type="Reactome" id="R-BTA-191273">
    <property type="pathway name" value="Cholesterol biosynthesis"/>
</dbReference>
<dbReference type="UniPathway" id="UPA00770">
    <property type="reaction ID" value="UER00757"/>
</dbReference>
<dbReference type="Proteomes" id="UP000009136">
    <property type="component" value="Chromosome X"/>
</dbReference>
<dbReference type="Bgee" id="ENSBTAG00000009231">
    <property type="expression patterns" value="Expressed in diaphragm and 104 other cell types or tissues"/>
</dbReference>
<dbReference type="GO" id="GO:0005783">
    <property type="term" value="C:endoplasmic reticulum"/>
    <property type="evidence" value="ECO:0000250"/>
    <property type="project" value="UniProtKB"/>
</dbReference>
<dbReference type="GO" id="GO:0005789">
    <property type="term" value="C:endoplasmic reticulum membrane"/>
    <property type="evidence" value="ECO:0007669"/>
    <property type="project" value="UniProtKB-SubCell"/>
</dbReference>
<dbReference type="GO" id="GO:0005811">
    <property type="term" value="C:lipid droplet"/>
    <property type="evidence" value="ECO:0000250"/>
    <property type="project" value="UniProtKB"/>
</dbReference>
<dbReference type="GO" id="GO:0102175">
    <property type="term" value="F:3-beta-hydroxysteroid dehydrogenase (NAD+)/C4-decarboxylase activity"/>
    <property type="evidence" value="ECO:0007669"/>
    <property type="project" value="RHEA"/>
</dbReference>
<dbReference type="GO" id="GO:0016616">
    <property type="term" value="F:oxidoreductase activity, acting on the CH-OH group of donors, NAD or NADP as acceptor"/>
    <property type="evidence" value="ECO:0000318"/>
    <property type="project" value="GO_Central"/>
</dbReference>
<dbReference type="GO" id="GO:0006695">
    <property type="term" value="P:cholesterol biosynthetic process"/>
    <property type="evidence" value="ECO:0007669"/>
    <property type="project" value="UniProtKB-KW"/>
</dbReference>
<dbReference type="GO" id="GO:0008203">
    <property type="term" value="P:cholesterol metabolic process"/>
    <property type="evidence" value="ECO:0000318"/>
    <property type="project" value="GO_Central"/>
</dbReference>
<dbReference type="CDD" id="cd09813">
    <property type="entry name" value="3b-HSD-NSDHL-like_SDR_e"/>
    <property type="match status" value="1"/>
</dbReference>
<dbReference type="FunFam" id="3.40.50.720:FF:000251">
    <property type="entry name" value="Sterol-4-alpha-carboxylate 3-dehydrogenase, decarboxylating"/>
    <property type="match status" value="1"/>
</dbReference>
<dbReference type="Gene3D" id="3.40.50.720">
    <property type="entry name" value="NAD(P)-binding Rossmann-like Domain"/>
    <property type="match status" value="1"/>
</dbReference>
<dbReference type="InterPro" id="IPR002225">
    <property type="entry name" value="3Beta_OHSteriod_DH/Estase"/>
</dbReference>
<dbReference type="InterPro" id="IPR050177">
    <property type="entry name" value="Lipid_A_modif_metabolic_enz"/>
</dbReference>
<dbReference type="InterPro" id="IPR036291">
    <property type="entry name" value="NAD(P)-bd_dom_sf"/>
</dbReference>
<dbReference type="PANTHER" id="PTHR43245">
    <property type="entry name" value="BIFUNCTIONAL POLYMYXIN RESISTANCE PROTEIN ARNA"/>
    <property type="match status" value="1"/>
</dbReference>
<dbReference type="PANTHER" id="PTHR43245:SF51">
    <property type="entry name" value="SHORT CHAIN DEHYDROGENASE_REDUCTASE FAMILY 42E, MEMBER 2"/>
    <property type="match status" value="1"/>
</dbReference>
<dbReference type="Pfam" id="PF01073">
    <property type="entry name" value="3Beta_HSD"/>
    <property type="match status" value="1"/>
</dbReference>
<dbReference type="SUPFAM" id="SSF51735">
    <property type="entry name" value="NAD(P)-binding Rossmann-fold domains"/>
    <property type="match status" value="1"/>
</dbReference>
<keyword id="KW-0007">Acetylation</keyword>
<keyword id="KW-0152">Cholesterol biosynthesis</keyword>
<keyword id="KW-0153">Cholesterol metabolism</keyword>
<keyword id="KW-0256">Endoplasmic reticulum</keyword>
<keyword id="KW-0444">Lipid biosynthesis</keyword>
<keyword id="KW-0551">Lipid droplet</keyword>
<keyword id="KW-0443">Lipid metabolism</keyword>
<keyword id="KW-0472">Membrane</keyword>
<keyword id="KW-0520">NAD</keyword>
<keyword id="KW-0560">Oxidoreductase</keyword>
<keyword id="KW-1185">Reference proteome</keyword>
<keyword id="KW-0752">Steroid biosynthesis</keyword>
<keyword id="KW-0753">Steroid metabolism</keyword>
<keyword id="KW-0756">Sterol biosynthesis</keyword>
<keyword id="KW-1207">Sterol metabolism</keyword>
<keyword id="KW-0812">Transmembrane</keyword>
<keyword id="KW-1133">Transmembrane helix</keyword>
<evidence type="ECO:0000250" key="1">
    <source>
        <dbReference type="UniProtKB" id="Q12068"/>
    </source>
</evidence>
<evidence type="ECO:0000250" key="2">
    <source>
        <dbReference type="UniProtKB" id="Q15738"/>
    </source>
</evidence>
<evidence type="ECO:0000250" key="3">
    <source>
        <dbReference type="UniProtKB" id="Q9R1J0"/>
    </source>
</evidence>
<evidence type="ECO:0000255" key="4"/>
<evidence type="ECO:0000305" key="5"/>
<proteinExistence type="evidence at transcript level"/>
<name>NSDHL_BOVIN</name>
<feature type="chain" id="PRO_0000327830" description="Sterol-4-alpha-carboxylate 3-dehydrogenase, decarboxylating">
    <location>
        <begin position="1"/>
        <end position="356"/>
    </location>
</feature>
<feature type="transmembrane region" description="Helical" evidence="4">
    <location>
        <begin position="281"/>
        <end position="301"/>
    </location>
</feature>
<feature type="short sequence motif" description="Prevents secretion from ER" evidence="3">
    <location>
        <begin position="353"/>
        <end position="356"/>
    </location>
</feature>
<feature type="active site" description="Proton acceptor" evidence="1">
    <location>
        <position position="155"/>
    </location>
</feature>
<feature type="binding site" evidence="1">
    <location>
        <position position="159"/>
    </location>
    <ligand>
        <name>NAD(+)</name>
        <dbReference type="ChEBI" id="CHEBI:57540"/>
    </ligand>
</feature>
<feature type="modified residue" description="N-acetylmethionine" evidence="2">
    <location>
        <position position="1"/>
    </location>
</feature>
<gene>
    <name type="primary">NSDHL</name>
</gene>
<organism>
    <name type="scientific">Bos taurus</name>
    <name type="common">Bovine</name>
    <dbReference type="NCBI Taxonomy" id="9913"/>
    <lineage>
        <taxon>Eukaryota</taxon>
        <taxon>Metazoa</taxon>
        <taxon>Chordata</taxon>
        <taxon>Craniata</taxon>
        <taxon>Vertebrata</taxon>
        <taxon>Euteleostomi</taxon>
        <taxon>Mammalia</taxon>
        <taxon>Eutheria</taxon>
        <taxon>Laurasiatheria</taxon>
        <taxon>Artiodactyla</taxon>
        <taxon>Ruminantia</taxon>
        <taxon>Pecora</taxon>
        <taxon>Bovidae</taxon>
        <taxon>Bovinae</taxon>
        <taxon>Bos</taxon>
    </lineage>
</organism>
<sequence>MEQAAGEPTRTCLTEDIPKAKRCTVIGGCGFLGQHMVEQLLARGYAVNVFDIRQGFDNPRVQFFLGDLCSQQDLYPALKGVSTVFHCASPPPFNNNKELFYRVNYIGTKNVIETCKEAGVQKLILTSSASVIFEGVDIKNGTEDLPYATKPIDYYTETKILQERAVLGAHDPEKNFLTTAIRPHGIFGPRDPQLVPILIEAAKKGKMKFMIGNGKNLVDFTFVENVVHGHILAAEHLSQDTALGGKAFHITNDEPIPFWTFLSRILTGLNYEAPKYHIPYWLAYYLALLVSLLVMVISPVIQLQPTFTPMRVALAGTFHYYSCEKAKKLMGYRPLVTMDDAVDKTVRSFHHLRKVM</sequence>